<organism>
    <name type="scientific">Paracoccus denitrificans (strain Pd 1222)</name>
    <dbReference type="NCBI Taxonomy" id="318586"/>
    <lineage>
        <taxon>Bacteria</taxon>
        <taxon>Pseudomonadati</taxon>
        <taxon>Pseudomonadota</taxon>
        <taxon>Alphaproteobacteria</taxon>
        <taxon>Rhodobacterales</taxon>
        <taxon>Paracoccaceae</taxon>
        <taxon>Paracoccus</taxon>
    </lineage>
</organism>
<protein>
    <recommendedName>
        <fullName>Methylamine utilization ferredoxin-type protein MauN</fullName>
    </recommendedName>
</protein>
<accession>Q51660</accession>
<accession>A1BBA5</accession>
<sequence>MIRWLTLSSRHRAAARRGWLSAHKWWLLRRCCQIAALAAFMSGPLAGYWIMRGNFASSEMLGVLGLSDPYILLQSAFAGWPVAAPALVGALLIGLFYLLVGGRVYCSFVCPVNIVTDTAHWLREKTGLTRDRKLDRRTRLWLLLGTLLAAALTGTIAWEYVNPVSMMQRGLIFGAGLGWSIVLLVFLLDLFVSRRAWCSHLCPVGAFYGLVGRFSLVRVSARNRDACDNCGACFSTCPEPHVIVPALKGEGSPLILSGDCINCGGCIDSCPNRVFAMASRLRP</sequence>
<proteinExistence type="predicted"/>
<comment type="function">
    <text evidence="3">Involved in electron transfer.</text>
</comment>
<comment type="pathway">
    <text>One-carbon metabolism; methylamine degradation.</text>
</comment>
<name>MAUN_PARDP</name>
<evidence type="ECO:0000250" key="1"/>
<evidence type="ECO:0000255" key="2">
    <source>
        <dbReference type="PROSITE-ProRule" id="PRU00711"/>
    </source>
</evidence>
<evidence type="ECO:0000305" key="3"/>
<dbReference type="EMBL" id="U15028">
    <property type="protein sequence ID" value="AAA86469.1"/>
    <property type="molecule type" value="Genomic_DNA"/>
</dbReference>
<dbReference type="EMBL" id="CP000491">
    <property type="protein sequence ID" value="ABL72799.1"/>
    <property type="molecule type" value="Genomic_DNA"/>
</dbReference>
<dbReference type="PIR" id="S65961">
    <property type="entry name" value="S65961"/>
</dbReference>
<dbReference type="RefSeq" id="WP_011750958.1">
    <property type="nucleotide sequence ID" value="NC_008688.1"/>
</dbReference>
<dbReference type="EnsemblBacteria" id="ABL72799">
    <property type="protein sequence ID" value="ABL72799"/>
    <property type="gene ID" value="Pden_4738"/>
</dbReference>
<dbReference type="GeneID" id="93454760"/>
<dbReference type="KEGG" id="pde:Pden_4738"/>
<dbReference type="eggNOG" id="COG0348">
    <property type="taxonomic scope" value="Bacteria"/>
</dbReference>
<dbReference type="HOGENOM" id="CLU_066585_1_0_5"/>
<dbReference type="OrthoDB" id="9806398at2"/>
<dbReference type="UniPathway" id="UPA00895"/>
<dbReference type="Proteomes" id="UP000000361">
    <property type="component" value="Plasmid pPD1222"/>
</dbReference>
<dbReference type="GO" id="GO:0005886">
    <property type="term" value="C:plasma membrane"/>
    <property type="evidence" value="ECO:0007669"/>
    <property type="project" value="TreeGrafter"/>
</dbReference>
<dbReference type="GO" id="GO:0051539">
    <property type="term" value="F:4 iron, 4 sulfur cluster binding"/>
    <property type="evidence" value="ECO:0007669"/>
    <property type="project" value="UniProtKB-KW"/>
</dbReference>
<dbReference type="GO" id="GO:0046872">
    <property type="term" value="F:metal ion binding"/>
    <property type="evidence" value="ECO:0007669"/>
    <property type="project" value="UniProtKB-KW"/>
</dbReference>
<dbReference type="Gene3D" id="3.30.70.20">
    <property type="match status" value="1"/>
</dbReference>
<dbReference type="InterPro" id="IPR017896">
    <property type="entry name" value="4Fe4S_Fe-S-bd"/>
</dbReference>
<dbReference type="InterPro" id="IPR017900">
    <property type="entry name" value="4Fe4S_Fe_S_CS"/>
</dbReference>
<dbReference type="InterPro" id="IPR051684">
    <property type="entry name" value="Electron_Trans/Redox"/>
</dbReference>
<dbReference type="InterPro" id="IPR011886">
    <property type="entry name" value="NapH_MauN"/>
</dbReference>
<dbReference type="NCBIfam" id="TIGR02163">
    <property type="entry name" value="napH"/>
    <property type="match status" value="1"/>
</dbReference>
<dbReference type="NCBIfam" id="NF007013">
    <property type="entry name" value="PRK09477.1"/>
    <property type="match status" value="1"/>
</dbReference>
<dbReference type="PANTHER" id="PTHR30176">
    <property type="entry name" value="FERREDOXIN-TYPE PROTEIN NAPH"/>
    <property type="match status" value="1"/>
</dbReference>
<dbReference type="PANTHER" id="PTHR30176:SF3">
    <property type="entry name" value="FERREDOXIN-TYPE PROTEIN NAPH"/>
    <property type="match status" value="1"/>
</dbReference>
<dbReference type="Pfam" id="PF13237">
    <property type="entry name" value="Fer4_10"/>
    <property type="match status" value="1"/>
</dbReference>
<dbReference type="Pfam" id="PF12801">
    <property type="entry name" value="Fer4_5"/>
    <property type="match status" value="2"/>
</dbReference>
<dbReference type="SUPFAM" id="SSF54862">
    <property type="entry name" value="4Fe-4S ferredoxins"/>
    <property type="match status" value="1"/>
</dbReference>
<dbReference type="PROSITE" id="PS00198">
    <property type="entry name" value="4FE4S_FER_1"/>
    <property type="match status" value="2"/>
</dbReference>
<dbReference type="PROSITE" id="PS51379">
    <property type="entry name" value="4FE4S_FER_2"/>
    <property type="match status" value="2"/>
</dbReference>
<feature type="chain" id="PRO_0000159290" description="Methylamine utilization ferredoxin-type protein MauN">
    <location>
        <begin position="1"/>
        <end position="283"/>
    </location>
</feature>
<feature type="domain" description="4Fe-4S ferredoxin-type 1" evidence="2">
    <location>
        <begin position="217"/>
        <end position="248"/>
    </location>
</feature>
<feature type="domain" description="4Fe-4S ferredoxin-type 2" evidence="2">
    <location>
        <begin position="251"/>
        <end position="280"/>
    </location>
</feature>
<feature type="binding site" evidence="1">
    <location>
        <position position="227"/>
    </location>
    <ligand>
        <name>[4Fe-4S] cluster</name>
        <dbReference type="ChEBI" id="CHEBI:49883"/>
        <label>1</label>
    </ligand>
</feature>
<feature type="binding site" evidence="1">
    <location>
        <position position="230"/>
    </location>
    <ligand>
        <name>[4Fe-4S] cluster</name>
        <dbReference type="ChEBI" id="CHEBI:49883"/>
        <label>1</label>
    </ligand>
</feature>
<feature type="binding site" evidence="1">
    <location>
        <position position="233"/>
    </location>
    <ligand>
        <name>[4Fe-4S] cluster</name>
        <dbReference type="ChEBI" id="CHEBI:49883"/>
        <label>1</label>
    </ligand>
</feature>
<feature type="binding site" evidence="1">
    <location>
        <position position="237"/>
    </location>
    <ligand>
        <name>[4Fe-4S] cluster</name>
        <dbReference type="ChEBI" id="CHEBI:49883"/>
        <label>2</label>
    </ligand>
</feature>
<feature type="binding site" evidence="1">
    <location>
        <position position="260"/>
    </location>
    <ligand>
        <name>[4Fe-4S] cluster</name>
        <dbReference type="ChEBI" id="CHEBI:49883"/>
        <label>2</label>
    </ligand>
</feature>
<feature type="binding site" evidence="1">
    <location>
        <position position="263"/>
    </location>
    <ligand>
        <name>[4Fe-4S] cluster</name>
        <dbReference type="ChEBI" id="CHEBI:49883"/>
        <label>2</label>
    </ligand>
</feature>
<feature type="binding site" evidence="1">
    <location>
        <position position="266"/>
    </location>
    <ligand>
        <name>[4Fe-4S] cluster</name>
        <dbReference type="ChEBI" id="CHEBI:49883"/>
        <label>2</label>
    </ligand>
</feature>
<feature type="binding site" evidence="1">
    <location>
        <position position="270"/>
    </location>
    <ligand>
        <name>[4Fe-4S] cluster</name>
        <dbReference type="ChEBI" id="CHEBI:49883"/>
        <label>1</label>
    </ligand>
</feature>
<gene>
    <name type="primary">mauN</name>
    <name type="ordered locus">Pden_4738</name>
</gene>
<reference key="1">
    <citation type="journal article" date="1995" name="Eur. J. Biochem.">
        <title>Mutational analysis of mau genes involved in methylamine metabolism in Paracoccus denitrificans.</title>
        <authorList>
            <person name="van der Palen C.J."/>
            <person name="Slotboom D.J."/>
            <person name="Jongejan L."/>
            <person name="Reijnders W.N."/>
            <person name="Harms N."/>
            <person name="Duine J.A."/>
            <person name="van Spanning R.J."/>
        </authorList>
    </citation>
    <scope>NUCLEOTIDE SEQUENCE [GENOMIC DNA]</scope>
</reference>
<reference key="2">
    <citation type="submission" date="2006-12" db="EMBL/GenBank/DDBJ databases">
        <title>Complete sequence of plasmid 1 of Paracoccus denitrificans PD1222.</title>
        <authorList>
            <person name="Copeland A."/>
            <person name="Lucas S."/>
            <person name="Lapidus A."/>
            <person name="Barry K."/>
            <person name="Detter J.C."/>
            <person name="Glavina del Rio T."/>
            <person name="Hammon N."/>
            <person name="Israni S."/>
            <person name="Dalin E."/>
            <person name="Tice H."/>
            <person name="Pitluck S."/>
            <person name="Munk A.C."/>
            <person name="Brettin T."/>
            <person name="Bruce D."/>
            <person name="Han C."/>
            <person name="Tapia R."/>
            <person name="Gilna P."/>
            <person name="Schmutz J."/>
            <person name="Larimer F."/>
            <person name="Land M."/>
            <person name="Hauser L."/>
            <person name="Kyrpides N."/>
            <person name="Lykidis A."/>
            <person name="Spiro S."/>
            <person name="Richardson D.J."/>
            <person name="Moir J.W.B."/>
            <person name="Ferguson S.J."/>
            <person name="van Spanning R.J.M."/>
            <person name="Richardson P."/>
        </authorList>
    </citation>
    <scope>NUCLEOTIDE SEQUENCE [LARGE SCALE GENOMIC DNA]</scope>
    <source>
        <strain>Pd 1222</strain>
    </source>
</reference>
<keyword id="KW-0004">4Fe-4S</keyword>
<keyword id="KW-0249">Electron transport</keyword>
<keyword id="KW-0408">Iron</keyword>
<keyword id="KW-0411">Iron-sulfur</keyword>
<keyword id="KW-0479">Metal-binding</keyword>
<keyword id="KW-0614">Plasmid</keyword>
<keyword id="KW-1185">Reference proteome</keyword>
<keyword id="KW-0677">Repeat</keyword>
<keyword id="KW-0813">Transport</keyword>
<geneLocation type="plasmid">
    <name>pPD1222</name>
</geneLocation>